<reference key="1">
    <citation type="submission" date="2007-08" db="EMBL/GenBank/DDBJ databases">
        <authorList>
            <consortium name="The Citrobacter koseri Genome Sequencing Project"/>
            <person name="McClelland M."/>
            <person name="Sanderson E.K."/>
            <person name="Porwollik S."/>
            <person name="Spieth J."/>
            <person name="Clifton W.S."/>
            <person name="Latreille P."/>
            <person name="Courtney L."/>
            <person name="Wang C."/>
            <person name="Pepin K."/>
            <person name="Bhonagiri V."/>
            <person name="Nash W."/>
            <person name="Johnson M."/>
            <person name="Thiruvilangam P."/>
            <person name="Wilson R."/>
        </authorList>
    </citation>
    <scope>NUCLEOTIDE SEQUENCE [LARGE SCALE GENOMIC DNA]</scope>
    <source>
        <strain>ATCC BAA-895 / CDC 4225-83 / SGSC4696</strain>
    </source>
</reference>
<proteinExistence type="inferred from homology"/>
<feature type="chain" id="PRO_1000008412" description="Holo-[acyl-carrier-protein] synthase">
    <location>
        <begin position="1"/>
        <end position="126"/>
    </location>
</feature>
<feature type="binding site" evidence="1">
    <location>
        <position position="9"/>
    </location>
    <ligand>
        <name>Mg(2+)</name>
        <dbReference type="ChEBI" id="CHEBI:18420"/>
    </ligand>
</feature>
<feature type="binding site" evidence="1">
    <location>
        <position position="58"/>
    </location>
    <ligand>
        <name>Mg(2+)</name>
        <dbReference type="ChEBI" id="CHEBI:18420"/>
    </ligand>
</feature>
<protein>
    <recommendedName>
        <fullName evidence="1">Holo-[acyl-carrier-protein] synthase</fullName>
        <shortName evidence="1">Holo-ACP synthase</shortName>
        <ecNumber evidence="1">2.7.8.7</ecNumber>
    </recommendedName>
    <alternativeName>
        <fullName evidence="1">4'-phosphopantetheinyl transferase AcpS</fullName>
    </alternativeName>
</protein>
<accession>A8AD21</accession>
<evidence type="ECO:0000255" key="1">
    <source>
        <dbReference type="HAMAP-Rule" id="MF_00101"/>
    </source>
</evidence>
<comment type="function">
    <text evidence="1">Transfers the 4'-phosphopantetheine moiety from coenzyme A to a Ser of acyl-carrier-protein.</text>
</comment>
<comment type="catalytic activity">
    <reaction evidence="1">
        <text>apo-[ACP] + CoA = holo-[ACP] + adenosine 3',5'-bisphosphate + H(+)</text>
        <dbReference type="Rhea" id="RHEA:12068"/>
        <dbReference type="Rhea" id="RHEA-COMP:9685"/>
        <dbReference type="Rhea" id="RHEA-COMP:9690"/>
        <dbReference type="ChEBI" id="CHEBI:15378"/>
        <dbReference type="ChEBI" id="CHEBI:29999"/>
        <dbReference type="ChEBI" id="CHEBI:57287"/>
        <dbReference type="ChEBI" id="CHEBI:58343"/>
        <dbReference type="ChEBI" id="CHEBI:64479"/>
        <dbReference type="EC" id="2.7.8.7"/>
    </reaction>
</comment>
<comment type="cofactor">
    <cofactor evidence="1">
        <name>Mg(2+)</name>
        <dbReference type="ChEBI" id="CHEBI:18420"/>
    </cofactor>
</comment>
<comment type="subcellular location">
    <subcellularLocation>
        <location evidence="1">Cytoplasm</location>
    </subcellularLocation>
</comment>
<comment type="similarity">
    <text evidence="1">Belongs to the P-Pant transferase superfamily. AcpS family.</text>
</comment>
<keyword id="KW-0963">Cytoplasm</keyword>
<keyword id="KW-0275">Fatty acid biosynthesis</keyword>
<keyword id="KW-0276">Fatty acid metabolism</keyword>
<keyword id="KW-0444">Lipid biosynthesis</keyword>
<keyword id="KW-0443">Lipid metabolism</keyword>
<keyword id="KW-0460">Magnesium</keyword>
<keyword id="KW-0479">Metal-binding</keyword>
<keyword id="KW-1185">Reference proteome</keyword>
<keyword id="KW-0808">Transferase</keyword>
<sequence length="126" mass="14125">MAILGLGTDIVEIARIEAVISRSGERLARRVLSDNEWAIWETHQQPVRFLAKRFAVKEAAAKAFGTGIRNGLAFNQFEVFNDELGKPRLRLWGEALKLAERLGVAHMHVTLADERHYACATVIIES</sequence>
<dbReference type="EC" id="2.7.8.7" evidence="1"/>
<dbReference type="EMBL" id="CP000822">
    <property type="protein sequence ID" value="ABV11384.1"/>
    <property type="molecule type" value="Genomic_DNA"/>
</dbReference>
<dbReference type="RefSeq" id="WP_012131217.1">
    <property type="nucleotide sequence ID" value="NC_009792.1"/>
</dbReference>
<dbReference type="SMR" id="A8AD21"/>
<dbReference type="STRING" id="290338.CKO_00219"/>
<dbReference type="GeneID" id="45134509"/>
<dbReference type="KEGG" id="cko:CKO_00219"/>
<dbReference type="HOGENOM" id="CLU_089696_3_1_6"/>
<dbReference type="OrthoDB" id="517356at2"/>
<dbReference type="Proteomes" id="UP000008148">
    <property type="component" value="Chromosome"/>
</dbReference>
<dbReference type="GO" id="GO:0005737">
    <property type="term" value="C:cytoplasm"/>
    <property type="evidence" value="ECO:0007669"/>
    <property type="project" value="UniProtKB-SubCell"/>
</dbReference>
<dbReference type="GO" id="GO:0008897">
    <property type="term" value="F:holo-[acyl-carrier-protein] synthase activity"/>
    <property type="evidence" value="ECO:0007669"/>
    <property type="project" value="UniProtKB-UniRule"/>
</dbReference>
<dbReference type="GO" id="GO:0000287">
    <property type="term" value="F:magnesium ion binding"/>
    <property type="evidence" value="ECO:0007669"/>
    <property type="project" value="UniProtKB-UniRule"/>
</dbReference>
<dbReference type="GO" id="GO:0006633">
    <property type="term" value="P:fatty acid biosynthetic process"/>
    <property type="evidence" value="ECO:0007669"/>
    <property type="project" value="UniProtKB-UniRule"/>
</dbReference>
<dbReference type="FunFam" id="3.90.470.20:FF:000001">
    <property type="entry name" value="Holo-[acyl-carrier-protein] synthase"/>
    <property type="match status" value="1"/>
</dbReference>
<dbReference type="Gene3D" id="3.90.470.20">
    <property type="entry name" value="4'-phosphopantetheinyl transferase domain"/>
    <property type="match status" value="1"/>
</dbReference>
<dbReference type="HAMAP" id="MF_00101">
    <property type="entry name" value="AcpS"/>
    <property type="match status" value="1"/>
</dbReference>
<dbReference type="InterPro" id="IPR008278">
    <property type="entry name" value="4-PPantetheinyl_Trfase_dom"/>
</dbReference>
<dbReference type="InterPro" id="IPR037143">
    <property type="entry name" value="4-PPantetheinyl_Trfase_dom_sf"/>
</dbReference>
<dbReference type="InterPro" id="IPR002582">
    <property type="entry name" value="ACPS"/>
</dbReference>
<dbReference type="InterPro" id="IPR004568">
    <property type="entry name" value="Ppantetheine-prot_Trfase_dom"/>
</dbReference>
<dbReference type="NCBIfam" id="TIGR00516">
    <property type="entry name" value="acpS"/>
    <property type="match status" value="1"/>
</dbReference>
<dbReference type="NCBIfam" id="TIGR00556">
    <property type="entry name" value="pantethn_trn"/>
    <property type="match status" value="1"/>
</dbReference>
<dbReference type="Pfam" id="PF01648">
    <property type="entry name" value="ACPS"/>
    <property type="match status" value="1"/>
</dbReference>
<dbReference type="SUPFAM" id="SSF56214">
    <property type="entry name" value="4'-phosphopantetheinyl transferase"/>
    <property type="match status" value="1"/>
</dbReference>
<name>ACPS_CITK8</name>
<gene>
    <name evidence="1" type="primary">acpS</name>
    <name type="ordered locus">CKO_00219</name>
</gene>
<organism>
    <name type="scientific">Citrobacter koseri (strain ATCC BAA-895 / CDC 4225-83 / SGSC4696)</name>
    <dbReference type="NCBI Taxonomy" id="290338"/>
    <lineage>
        <taxon>Bacteria</taxon>
        <taxon>Pseudomonadati</taxon>
        <taxon>Pseudomonadota</taxon>
        <taxon>Gammaproteobacteria</taxon>
        <taxon>Enterobacterales</taxon>
        <taxon>Enterobacteriaceae</taxon>
        <taxon>Citrobacter</taxon>
    </lineage>
</organism>